<gene>
    <name evidence="2" type="primary">deoD2</name>
    <name type="ordered locus">VVA0354</name>
</gene>
<dbReference type="EC" id="2.4.2.1" evidence="2"/>
<dbReference type="EMBL" id="BA000038">
    <property type="protein sequence ID" value="BAC96380.1"/>
    <property type="status" value="ALT_INIT"/>
    <property type="molecule type" value="Genomic_DNA"/>
</dbReference>
<dbReference type="SMR" id="Q7MFG6"/>
<dbReference type="STRING" id="672.VV93_v1c33400"/>
<dbReference type="KEGG" id="vvy:VVA0354"/>
<dbReference type="eggNOG" id="COG0813">
    <property type="taxonomic scope" value="Bacteria"/>
</dbReference>
<dbReference type="HOGENOM" id="CLU_068457_2_0_6"/>
<dbReference type="Proteomes" id="UP000002675">
    <property type="component" value="Chromosome II"/>
</dbReference>
<dbReference type="GO" id="GO:0005829">
    <property type="term" value="C:cytosol"/>
    <property type="evidence" value="ECO:0007669"/>
    <property type="project" value="TreeGrafter"/>
</dbReference>
<dbReference type="GO" id="GO:0004731">
    <property type="term" value="F:purine-nucleoside phosphorylase activity"/>
    <property type="evidence" value="ECO:0007669"/>
    <property type="project" value="UniProtKB-UniRule"/>
</dbReference>
<dbReference type="GO" id="GO:0006152">
    <property type="term" value="P:purine nucleoside catabolic process"/>
    <property type="evidence" value="ECO:0007669"/>
    <property type="project" value="TreeGrafter"/>
</dbReference>
<dbReference type="CDD" id="cd09006">
    <property type="entry name" value="PNP_EcPNPI-like"/>
    <property type="match status" value="1"/>
</dbReference>
<dbReference type="Gene3D" id="3.40.50.1580">
    <property type="entry name" value="Nucleoside phosphorylase domain"/>
    <property type="match status" value="1"/>
</dbReference>
<dbReference type="HAMAP" id="MF_01627">
    <property type="entry name" value="Pur_nucleosid_phosp"/>
    <property type="match status" value="1"/>
</dbReference>
<dbReference type="InterPro" id="IPR004402">
    <property type="entry name" value="DeoD-type"/>
</dbReference>
<dbReference type="InterPro" id="IPR000845">
    <property type="entry name" value="Nucleoside_phosphorylase_d"/>
</dbReference>
<dbReference type="InterPro" id="IPR035994">
    <property type="entry name" value="Nucleoside_phosphorylase_sf"/>
</dbReference>
<dbReference type="NCBIfam" id="TIGR00107">
    <property type="entry name" value="deoD"/>
    <property type="match status" value="1"/>
</dbReference>
<dbReference type="NCBIfam" id="NF004489">
    <property type="entry name" value="PRK05819.1"/>
    <property type="match status" value="1"/>
</dbReference>
<dbReference type="NCBIfam" id="NF009914">
    <property type="entry name" value="PRK13374.1"/>
    <property type="match status" value="1"/>
</dbReference>
<dbReference type="PANTHER" id="PTHR43691:SF11">
    <property type="entry name" value="FI09636P-RELATED"/>
    <property type="match status" value="1"/>
</dbReference>
<dbReference type="PANTHER" id="PTHR43691">
    <property type="entry name" value="URIDINE PHOSPHORYLASE"/>
    <property type="match status" value="1"/>
</dbReference>
<dbReference type="Pfam" id="PF01048">
    <property type="entry name" value="PNP_UDP_1"/>
    <property type="match status" value="1"/>
</dbReference>
<dbReference type="SUPFAM" id="SSF53167">
    <property type="entry name" value="Purine and uridine phosphorylases"/>
    <property type="match status" value="1"/>
</dbReference>
<sequence>MATPHINAQPGDFAETVLMPGDPLRAKYIAETFLEDVKQVCDVRNMFGFTGTYKGKKVSVMGHGMGIPSACIYVHELIAEYGVKNVIRVGSCGAVRDDVNLMDVVIGMGASTDSKVNRIRFNDHDFAALADYGLLEEAVKQARAQNVPVKVGNVFSADLFYTPEADIFEKMEKLGILGVDMEAAGIYGVAADLKAKALTILTVSDHIIRGEKLSSEDRQKSFNDMMKVALETAINL</sequence>
<keyword id="KW-0328">Glycosyltransferase</keyword>
<keyword id="KW-0808">Transferase</keyword>
<comment type="function">
    <text evidence="2">Catalyzes the reversible phosphorolytic breakdown of the N-glycosidic bond in the beta-(deoxy)ribonucleoside molecules, with the formation of the corresponding free purine bases and pentose-1-phosphate.</text>
</comment>
<comment type="catalytic activity">
    <reaction evidence="2">
        <text>a purine D-ribonucleoside + phosphate = a purine nucleobase + alpha-D-ribose 1-phosphate</text>
        <dbReference type="Rhea" id="RHEA:19805"/>
        <dbReference type="ChEBI" id="CHEBI:26386"/>
        <dbReference type="ChEBI" id="CHEBI:43474"/>
        <dbReference type="ChEBI" id="CHEBI:57720"/>
        <dbReference type="ChEBI" id="CHEBI:142355"/>
        <dbReference type="EC" id="2.4.2.1"/>
    </reaction>
</comment>
<comment type="catalytic activity">
    <reaction evidence="2">
        <text>a purine 2'-deoxy-D-ribonucleoside + phosphate = a purine nucleobase + 2-deoxy-alpha-D-ribose 1-phosphate</text>
        <dbReference type="Rhea" id="RHEA:36431"/>
        <dbReference type="ChEBI" id="CHEBI:26386"/>
        <dbReference type="ChEBI" id="CHEBI:43474"/>
        <dbReference type="ChEBI" id="CHEBI:57259"/>
        <dbReference type="ChEBI" id="CHEBI:142361"/>
        <dbReference type="EC" id="2.4.2.1"/>
    </reaction>
</comment>
<comment type="subunit">
    <text evidence="2">Homohexamer; trimer of homodimers.</text>
</comment>
<comment type="similarity">
    <text evidence="2">Belongs to the PNP/UDP phosphorylase family.</text>
</comment>
<comment type="sequence caution" evidence="3">
    <conflict type="erroneous initiation">
        <sequence resource="EMBL-CDS" id="BAC96380"/>
    </conflict>
</comment>
<organism>
    <name type="scientific">Vibrio vulnificus (strain YJ016)</name>
    <dbReference type="NCBI Taxonomy" id="196600"/>
    <lineage>
        <taxon>Bacteria</taxon>
        <taxon>Pseudomonadati</taxon>
        <taxon>Pseudomonadota</taxon>
        <taxon>Gammaproteobacteria</taxon>
        <taxon>Vibrionales</taxon>
        <taxon>Vibrionaceae</taxon>
        <taxon>Vibrio</taxon>
    </lineage>
</organism>
<feature type="chain" id="PRO_0000063179" description="Purine nucleoside phosphorylase DeoD-type 2">
    <location>
        <begin position="1"/>
        <end position="236"/>
    </location>
</feature>
<feature type="active site" description="Proton donor" evidence="2">
    <location>
        <position position="205"/>
    </location>
</feature>
<feature type="binding site" evidence="1">
    <location>
        <position position="5"/>
    </location>
    <ligand>
        <name>a purine D-ribonucleoside</name>
        <dbReference type="ChEBI" id="CHEBI:142355"/>
        <note>ligand shared between dimeric partners</note>
    </ligand>
</feature>
<feature type="binding site" description="in other chain" evidence="1">
    <location>
        <position position="21"/>
    </location>
    <ligand>
        <name>phosphate</name>
        <dbReference type="ChEBI" id="CHEBI:43474"/>
        <note>ligand shared between dimeric partners</note>
    </ligand>
</feature>
<feature type="binding site" description="in other chain" evidence="1">
    <location>
        <position position="25"/>
    </location>
    <ligand>
        <name>phosphate</name>
        <dbReference type="ChEBI" id="CHEBI:43474"/>
        <note>ligand shared between dimeric partners</note>
    </ligand>
</feature>
<feature type="binding site" evidence="1">
    <location>
        <position position="44"/>
    </location>
    <ligand>
        <name>phosphate</name>
        <dbReference type="ChEBI" id="CHEBI:43474"/>
        <note>ligand shared between dimeric partners</note>
    </ligand>
</feature>
<feature type="binding site" description="in other chain" evidence="1">
    <location>
        <begin position="88"/>
        <end position="91"/>
    </location>
    <ligand>
        <name>phosphate</name>
        <dbReference type="ChEBI" id="CHEBI:43474"/>
        <note>ligand shared between dimeric partners</note>
    </ligand>
</feature>
<feature type="binding site" description="in other chain" evidence="1">
    <location>
        <begin position="180"/>
        <end position="182"/>
    </location>
    <ligand>
        <name>a purine D-ribonucleoside</name>
        <dbReference type="ChEBI" id="CHEBI:142355"/>
        <note>ligand shared between dimeric partners</note>
    </ligand>
</feature>
<feature type="binding site" description="in other chain" evidence="1">
    <location>
        <begin position="204"/>
        <end position="205"/>
    </location>
    <ligand>
        <name>a purine D-ribonucleoside</name>
        <dbReference type="ChEBI" id="CHEBI:142355"/>
        <note>ligand shared between dimeric partners</note>
    </ligand>
</feature>
<feature type="site" description="Important for catalytic activity" evidence="2">
    <location>
        <position position="218"/>
    </location>
</feature>
<proteinExistence type="inferred from homology"/>
<evidence type="ECO:0000250" key="1">
    <source>
        <dbReference type="UniProtKB" id="P50389"/>
    </source>
</evidence>
<evidence type="ECO:0000255" key="2">
    <source>
        <dbReference type="HAMAP-Rule" id="MF_01627"/>
    </source>
</evidence>
<evidence type="ECO:0000305" key="3"/>
<accession>Q7MFG6</accession>
<protein>
    <recommendedName>
        <fullName evidence="2">Purine nucleoside phosphorylase DeoD-type 2</fullName>
        <shortName evidence="2">PNP 2</shortName>
        <ecNumber evidence="2">2.4.2.1</ecNumber>
    </recommendedName>
</protein>
<reference key="1">
    <citation type="journal article" date="2003" name="Genome Res.">
        <title>Comparative genome analysis of Vibrio vulnificus, a marine pathogen.</title>
        <authorList>
            <person name="Chen C.-Y."/>
            <person name="Wu K.-M."/>
            <person name="Chang Y.-C."/>
            <person name="Chang C.-H."/>
            <person name="Tsai H.-C."/>
            <person name="Liao T.-L."/>
            <person name="Liu Y.-M."/>
            <person name="Chen H.-J."/>
            <person name="Shen A.B.-T."/>
            <person name="Li J.-C."/>
            <person name="Su T.-L."/>
            <person name="Shao C.-P."/>
            <person name="Lee C.-T."/>
            <person name="Hor L.-I."/>
            <person name="Tsai S.-F."/>
        </authorList>
    </citation>
    <scope>NUCLEOTIDE SEQUENCE [LARGE SCALE GENOMIC DNA]</scope>
    <source>
        <strain>YJ016</strain>
    </source>
</reference>
<name>DEOD2_VIBVY</name>